<reference key="1">
    <citation type="journal article" date="2001" name="J. Bacteriol.">
        <title>Genome sequence and comparative analysis of the solvent-producing bacterium Clostridium acetobutylicum.</title>
        <authorList>
            <person name="Noelling J."/>
            <person name="Breton G."/>
            <person name="Omelchenko M.V."/>
            <person name="Makarova K.S."/>
            <person name="Zeng Q."/>
            <person name="Gibson R."/>
            <person name="Lee H.M."/>
            <person name="Dubois J."/>
            <person name="Qiu D."/>
            <person name="Hitti J."/>
            <person name="Wolf Y.I."/>
            <person name="Tatusov R.L."/>
            <person name="Sabathe F."/>
            <person name="Doucette-Stamm L.A."/>
            <person name="Soucaille P."/>
            <person name="Daly M.J."/>
            <person name="Bennett G.N."/>
            <person name="Koonin E.V."/>
            <person name="Smith D.R."/>
        </authorList>
    </citation>
    <scope>NUCLEOTIDE SEQUENCE [LARGE SCALE GENOMIC DNA]</scope>
    <source>
        <strain>ATCC 824 / DSM 792 / JCM 1419 / IAM 19013 / LMG 5710 / NBRC 13948 / NRRL B-527 / VKM B-1787 / 2291 / W</strain>
    </source>
</reference>
<comment type="function">
    <text evidence="1">Catalyzes the transfer of an acyl group from acyl-phosphate (acyl-PO(4)) to glycerol-3-phosphate (G3P) to form lysophosphatidic acid (LPA). This enzyme utilizes acyl-phosphate as fatty acyl donor, but not acyl-CoA or acyl-ACP.</text>
</comment>
<comment type="catalytic activity">
    <reaction evidence="1">
        <text>an acyl phosphate + sn-glycerol 3-phosphate = a 1-acyl-sn-glycero-3-phosphate + phosphate</text>
        <dbReference type="Rhea" id="RHEA:34075"/>
        <dbReference type="ChEBI" id="CHEBI:43474"/>
        <dbReference type="ChEBI" id="CHEBI:57597"/>
        <dbReference type="ChEBI" id="CHEBI:57970"/>
        <dbReference type="ChEBI" id="CHEBI:59918"/>
        <dbReference type="EC" id="2.3.1.275"/>
    </reaction>
</comment>
<comment type="pathway">
    <text evidence="1">Lipid metabolism; phospholipid metabolism.</text>
</comment>
<comment type="subunit">
    <text evidence="1">Probably interacts with PlsX.</text>
</comment>
<comment type="subcellular location">
    <subcellularLocation>
        <location evidence="1">Cell membrane</location>
        <topology evidence="1">Multi-pass membrane protein</topology>
    </subcellularLocation>
</comment>
<comment type="similarity">
    <text evidence="1">Belongs to the PlsY family.</text>
</comment>
<evidence type="ECO:0000255" key="1">
    <source>
        <dbReference type="HAMAP-Rule" id="MF_01043"/>
    </source>
</evidence>
<accession>Q97G69</accession>
<gene>
    <name evidence="1" type="primary">plsY</name>
    <name type="ordered locus">CA_C2500</name>
</gene>
<dbReference type="EC" id="2.3.1.275" evidence="1"/>
<dbReference type="EMBL" id="AE001437">
    <property type="protein sequence ID" value="AAK80454.1"/>
    <property type="molecule type" value="Genomic_DNA"/>
</dbReference>
<dbReference type="PIR" id="C97208">
    <property type="entry name" value="C97208"/>
</dbReference>
<dbReference type="RefSeq" id="NP_349114.1">
    <property type="nucleotide sequence ID" value="NC_003030.1"/>
</dbReference>
<dbReference type="RefSeq" id="WP_010965795.1">
    <property type="nucleotide sequence ID" value="NC_003030.1"/>
</dbReference>
<dbReference type="SMR" id="Q97G69"/>
<dbReference type="STRING" id="272562.CA_C2500"/>
<dbReference type="GeneID" id="44998977"/>
<dbReference type="KEGG" id="cac:CA_C2500"/>
<dbReference type="PATRIC" id="fig|272562.8.peg.2695"/>
<dbReference type="eggNOG" id="COG0344">
    <property type="taxonomic scope" value="Bacteria"/>
</dbReference>
<dbReference type="HOGENOM" id="CLU_081254_7_1_9"/>
<dbReference type="OrthoDB" id="9777124at2"/>
<dbReference type="UniPathway" id="UPA00085"/>
<dbReference type="Proteomes" id="UP000000814">
    <property type="component" value="Chromosome"/>
</dbReference>
<dbReference type="GO" id="GO:0005886">
    <property type="term" value="C:plasma membrane"/>
    <property type="evidence" value="ECO:0007669"/>
    <property type="project" value="UniProtKB-SubCell"/>
</dbReference>
<dbReference type="GO" id="GO:0043772">
    <property type="term" value="F:acyl-phosphate glycerol-3-phosphate acyltransferase activity"/>
    <property type="evidence" value="ECO:0007669"/>
    <property type="project" value="UniProtKB-UniRule"/>
</dbReference>
<dbReference type="GO" id="GO:0008654">
    <property type="term" value="P:phospholipid biosynthetic process"/>
    <property type="evidence" value="ECO:0007669"/>
    <property type="project" value="UniProtKB-UniRule"/>
</dbReference>
<dbReference type="HAMAP" id="MF_01043">
    <property type="entry name" value="PlsY"/>
    <property type="match status" value="1"/>
</dbReference>
<dbReference type="InterPro" id="IPR003811">
    <property type="entry name" value="G3P_acylTferase_PlsY"/>
</dbReference>
<dbReference type="NCBIfam" id="TIGR00023">
    <property type="entry name" value="glycerol-3-phosphate 1-O-acyltransferase PlsY"/>
    <property type="match status" value="1"/>
</dbReference>
<dbReference type="PANTHER" id="PTHR30309:SF0">
    <property type="entry name" value="GLYCEROL-3-PHOSPHATE ACYLTRANSFERASE-RELATED"/>
    <property type="match status" value="1"/>
</dbReference>
<dbReference type="PANTHER" id="PTHR30309">
    <property type="entry name" value="INNER MEMBRANE PROTEIN YGIH"/>
    <property type="match status" value="1"/>
</dbReference>
<dbReference type="Pfam" id="PF02660">
    <property type="entry name" value="G3P_acyltransf"/>
    <property type="match status" value="1"/>
</dbReference>
<dbReference type="SMART" id="SM01207">
    <property type="entry name" value="G3P_acyltransf"/>
    <property type="match status" value="1"/>
</dbReference>
<proteinExistence type="inferred from homology"/>
<name>PLSY_CLOAB</name>
<protein>
    <recommendedName>
        <fullName evidence="1">Glycerol-3-phosphate acyltransferase</fullName>
    </recommendedName>
    <alternativeName>
        <fullName evidence="1">Acyl-PO4 G3P acyltransferase</fullName>
    </alternativeName>
    <alternativeName>
        <fullName evidence="1">Acyl-phosphate--glycerol-3-phosphate acyltransferase</fullName>
    </alternativeName>
    <alternativeName>
        <fullName evidence="1">G3P acyltransferase</fullName>
        <shortName evidence="1">GPAT</shortName>
        <ecNumber evidence="1">2.3.1.275</ecNumber>
    </alternativeName>
    <alternativeName>
        <fullName evidence="1">Lysophosphatidic acid synthase</fullName>
        <shortName evidence="1">LPA synthase</shortName>
    </alternativeName>
</protein>
<keyword id="KW-1003">Cell membrane</keyword>
<keyword id="KW-0444">Lipid biosynthesis</keyword>
<keyword id="KW-0443">Lipid metabolism</keyword>
<keyword id="KW-0472">Membrane</keyword>
<keyword id="KW-0594">Phospholipid biosynthesis</keyword>
<keyword id="KW-1208">Phospholipid metabolism</keyword>
<keyword id="KW-1185">Reference proteome</keyword>
<keyword id="KW-0808">Transferase</keyword>
<keyword id="KW-0812">Transmembrane</keyword>
<keyword id="KW-1133">Transmembrane helix</keyword>
<organism>
    <name type="scientific">Clostridium acetobutylicum (strain ATCC 824 / DSM 792 / JCM 1419 / IAM 19013 / LMG 5710 / NBRC 13948 / NRRL B-527 / VKM B-1787 / 2291 / W)</name>
    <dbReference type="NCBI Taxonomy" id="272562"/>
    <lineage>
        <taxon>Bacteria</taxon>
        <taxon>Bacillati</taxon>
        <taxon>Bacillota</taxon>
        <taxon>Clostridia</taxon>
        <taxon>Eubacteriales</taxon>
        <taxon>Clostridiaceae</taxon>
        <taxon>Clostridium</taxon>
    </lineage>
</organism>
<feature type="chain" id="PRO_0000188346" description="Glycerol-3-phosphate acyltransferase">
    <location>
        <begin position="1"/>
        <end position="198"/>
    </location>
</feature>
<feature type="transmembrane region" description="Helical" evidence="1">
    <location>
        <begin position="2"/>
        <end position="22"/>
    </location>
</feature>
<feature type="transmembrane region" description="Helical" evidence="1">
    <location>
        <begin position="55"/>
        <end position="75"/>
    </location>
</feature>
<feature type="transmembrane region" description="Helical" evidence="1">
    <location>
        <begin position="88"/>
        <end position="108"/>
    </location>
</feature>
<feature type="transmembrane region" description="Helical" evidence="1">
    <location>
        <begin position="118"/>
        <end position="138"/>
    </location>
</feature>
<feature type="transmembrane region" description="Helical" evidence="1">
    <location>
        <begin position="162"/>
        <end position="182"/>
    </location>
</feature>
<sequence length="198" mass="21099">MIIVIITVMVSFLCGSIPTGYLITKKLSGIDVRTKGSGNIGSTNVKRVAGTKISMITQVMDILKGIIPVLLCMLIASKIKLPISTSMYLSIIVIAVILGHDYTPFLGFNGGKGVNTTVGAFFLLAPAAVLAGAVVYFVLRLFTKIVSIKSIAVGITMPIACIALRLPIEITVCAIIACGLLILRHKDNLIRLVNNEEK</sequence>